<protein>
    <recommendedName>
        <fullName>Cell cycle checkpoint control protein RAD9B</fullName>
    </recommendedName>
    <alternativeName>
        <fullName>DNA repair exonuclease rad9 homolog B</fullName>
    </alternativeName>
</protein>
<keyword id="KW-0597">Phosphoprotein</keyword>
<keyword id="KW-1185">Reference proteome</keyword>
<feature type="chain" id="PRO_0000226699" description="Cell cycle checkpoint control protein RAD9B">
    <location>
        <begin position="1"/>
        <end position="442"/>
    </location>
</feature>
<feature type="region of interest" description="Disordered" evidence="3">
    <location>
        <begin position="370"/>
        <end position="392"/>
    </location>
</feature>
<feature type="region of interest" description="Disordered" evidence="3">
    <location>
        <begin position="422"/>
        <end position="442"/>
    </location>
</feature>
<feature type="modified residue" description="Phosphoserine" evidence="2">
    <location>
        <position position="387"/>
    </location>
</feature>
<evidence type="ECO:0000250" key="1"/>
<evidence type="ECO:0000250" key="2">
    <source>
        <dbReference type="UniProtKB" id="Q6WBX7"/>
    </source>
</evidence>
<evidence type="ECO:0000256" key="3">
    <source>
        <dbReference type="SAM" id="MobiDB-lite"/>
    </source>
</evidence>
<evidence type="ECO:0000305" key="4"/>
<gene>
    <name type="primary">RAD9B</name>
</gene>
<accession>Q5E9X8</accession>
<name>RAD9B_BOVIN</name>
<reference key="1">
    <citation type="journal article" date="2005" name="BMC Genomics">
        <title>Characterization of 954 bovine full-CDS cDNA sequences.</title>
        <authorList>
            <person name="Harhay G.P."/>
            <person name="Sonstegard T.S."/>
            <person name="Keele J.W."/>
            <person name="Heaton M.P."/>
            <person name="Clawson M.L."/>
            <person name="Snelling W.M."/>
            <person name="Wiedmann R.T."/>
            <person name="Van Tassell C.P."/>
            <person name="Smith T.P.L."/>
        </authorList>
    </citation>
    <scope>NUCLEOTIDE SEQUENCE [LARGE SCALE MRNA]</scope>
</reference>
<dbReference type="EMBL" id="BT020792">
    <property type="protein sequence ID" value="AAX08809.1"/>
    <property type="molecule type" value="mRNA"/>
</dbReference>
<dbReference type="RefSeq" id="NP_001030556.1">
    <property type="nucleotide sequence ID" value="NM_001035479.1"/>
</dbReference>
<dbReference type="SMR" id="Q5E9X8"/>
<dbReference type="FunCoup" id="Q5E9X8">
    <property type="interactions" value="1361"/>
</dbReference>
<dbReference type="STRING" id="9913.ENSBTAP00000024392"/>
<dbReference type="PaxDb" id="9913-ENSBTAP00000024392"/>
<dbReference type="GeneID" id="616597"/>
<dbReference type="KEGG" id="bta:616597"/>
<dbReference type="CTD" id="144715"/>
<dbReference type="eggNOG" id="KOG2810">
    <property type="taxonomic scope" value="Eukaryota"/>
</dbReference>
<dbReference type="InParanoid" id="Q5E9X8"/>
<dbReference type="OrthoDB" id="60092at2759"/>
<dbReference type="Proteomes" id="UP000009136">
    <property type="component" value="Unplaced"/>
</dbReference>
<dbReference type="GO" id="GO:0030896">
    <property type="term" value="C:checkpoint clamp complex"/>
    <property type="evidence" value="ECO:0000318"/>
    <property type="project" value="GO_Central"/>
</dbReference>
<dbReference type="GO" id="GO:0071479">
    <property type="term" value="P:cellular response to ionizing radiation"/>
    <property type="evidence" value="ECO:0000318"/>
    <property type="project" value="GO_Central"/>
</dbReference>
<dbReference type="GO" id="GO:0006281">
    <property type="term" value="P:DNA repair"/>
    <property type="evidence" value="ECO:0000318"/>
    <property type="project" value="GO_Central"/>
</dbReference>
<dbReference type="GO" id="GO:0000076">
    <property type="term" value="P:DNA replication checkpoint signaling"/>
    <property type="evidence" value="ECO:0000318"/>
    <property type="project" value="GO_Central"/>
</dbReference>
<dbReference type="GO" id="GO:0031573">
    <property type="term" value="P:mitotic intra-S DNA damage checkpoint signaling"/>
    <property type="evidence" value="ECO:0000318"/>
    <property type="project" value="GO_Central"/>
</dbReference>
<dbReference type="CDD" id="cd00577">
    <property type="entry name" value="PCNA"/>
    <property type="match status" value="1"/>
</dbReference>
<dbReference type="FunFam" id="3.70.10.10:FF:000008">
    <property type="entry name" value="Cell cycle checkpoint control protein"/>
    <property type="match status" value="1"/>
</dbReference>
<dbReference type="Gene3D" id="3.70.10.10">
    <property type="match status" value="1"/>
</dbReference>
<dbReference type="InterPro" id="IPR046938">
    <property type="entry name" value="DNA_clamp_sf"/>
</dbReference>
<dbReference type="InterPro" id="IPR026584">
    <property type="entry name" value="Rad9"/>
</dbReference>
<dbReference type="InterPro" id="IPR007268">
    <property type="entry name" value="Rad9/Ddc1"/>
</dbReference>
<dbReference type="PANTHER" id="PTHR15237:SF2">
    <property type="entry name" value="CELL CYCLE CHECKPOINT CONTROL PROTEIN RAD9B"/>
    <property type="match status" value="1"/>
</dbReference>
<dbReference type="PANTHER" id="PTHR15237">
    <property type="entry name" value="DNA REPAIR PROTEIN RAD9"/>
    <property type="match status" value="1"/>
</dbReference>
<dbReference type="Pfam" id="PF04139">
    <property type="entry name" value="Rad9"/>
    <property type="match status" value="1"/>
</dbReference>
<dbReference type="PIRSF" id="PIRSF009303">
    <property type="entry name" value="Cell_cycle_RAD9"/>
    <property type="match status" value="1"/>
</dbReference>
<dbReference type="SUPFAM" id="SSF55979">
    <property type="entry name" value="DNA clamp"/>
    <property type="match status" value="1"/>
</dbReference>
<organism>
    <name type="scientific">Bos taurus</name>
    <name type="common">Bovine</name>
    <dbReference type="NCBI Taxonomy" id="9913"/>
    <lineage>
        <taxon>Eukaryota</taxon>
        <taxon>Metazoa</taxon>
        <taxon>Chordata</taxon>
        <taxon>Craniata</taxon>
        <taxon>Vertebrata</taxon>
        <taxon>Euteleostomi</taxon>
        <taxon>Mammalia</taxon>
        <taxon>Eutheria</taxon>
        <taxon>Laurasiatheria</taxon>
        <taxon>Artiodactyla</taxon>
        <taxon>Ruminantia</taxon>
        <taxon>Pecora</taxon>
        <taxon>Bovidae</taxon>
        <taxon>Bovinae</taxon>
        <taxon>Bos</taxon>
    </lineage>
</organism>
<sequence length="442" mass="49346">MKAHLLLFMRIIYIHRCPLNEVAPPGQVVEVFGKAIQALSRVSDELWLDPSEKGLALRSVNSCRSAYGCVLFSPVFFQHYQWSASVKMNDTDIILNLNCRLGMKSILPIFRCLNSLEKNVEKCKIFTRSDKCKVVIQFFCRHGIKKIHNVCFQGSRPLQVIFQKNMCANTLVIQPRVLAEAIVLFTSSQEEVTLAVTPLKVCIKSSNEESMDLTDSVYSEMFVGPDEFDFFQIGIDTEITFCFKELKGVLTFSEAIHAPIAIHFDFPGKPMALSIDDMLLEANFILATLADEPSRASSLQTLYLSQKQRRSEPIHSNSKAGKNITSKVPEYISRKVEPKRLYSNETPTNISTLENCGSPLMKRANKDITEVPESDGNLSEVPESSVSDTEDVPGSPCLKKFSCMFFGAASSDQQEPFSLPFQSLATASGSEEDMNNGSFSTF</sequence>
<proteinExistence type="evidence at transcript level"/>
<comment type="subunit">
    <text evidence="1">Interacts with HUS1, HUS1B, RAD1, RAD9A and RAD17.</text>
</comment>
<comment type="similarity">
    <text evidence="4">Belongs to the rad9 family.</text>
</comment>